<comment type="function">
    <text evidence="1">Specifically methylates the cytosine at position 967 (m5C967) of 16S rRNA.</text>
</comment>
<comment type="catalytic activity">
    <reaction evidence="1">
        <text>cytidine(967) in 16S rRNA + S-adenosyl-L-methionine = 5-methylcytidine(967) in 16S rRNA + S-adenosyl-L-homocysteine + H(+)</text>
        <dbReference type="Rhea" id="RHEA:42748"/>
        <dbReference type="Rhea" id="RHEA-COMP:10219"/>
        <dbReference type="Rhea" id="RHEA-COMP:10220"/>
        <dbReference type="ChEBI" id="CHEBI:15378"/>
        <dbReference type="ChEBI" id="CHEBI:57856"/>
        <dbReference type="ChEBI" id="CHEBI:59789"/>
        <dbReference type="ChEBI" id="CHEBI:74483"/>
        <dbReference type="ChEBI" id="CHEBI:82748"/>
        <dbReference type="EC" id="2.1.1.176"/>
    </reaction>
</comment>
<comment type="subcellular location">
    <subcellularLocation>
        <location evidence="1">Cytoplasm</location>
    </subcellularLocation>
</comment>
<comment type="similarity">
    <text evidence="1">Belongs to the class I-like SAM-binding methyltransferase superfamily. RsmB/NOP family.</text>
</comment>
<accession>Q3YWX1</accession>
<sequence length="429" mass="48323">MKKQRNLRSMAAQAVEQVVEQGQSLSNILPPLQQKVSDKDKALLQELCFGVLRTLSQLDWLINKLMARPMTGKQRTVHYLIMVGLYQLLYTRIPPHAALAETVEGAIAIKRPQLKGLINGVLRQFQRQQEELLAEFNTSDARYLHPSWLLKRLQKAYPEQWQSIVEANNQRPPMWLRVNRTHHSRDSWLALLDEAGMKGFPHADYPDAVRLETPAPVHALPGFEDGWVTVQDASAQGCMTWLAPQNGEHILDLCAAPGGKTTHILEVAPEAQVVAVDIDEQRLSRVHDNLKRLGMKATVKQGDGRYPSQWCGEQQFDRILLDAPCSATGVIRRHPDIKWLRRDRDIPELAQLQSEILDAIWPHLKSGGTLVYATCSVLPEENSLQIKAFLQRTADAELCETGTPEQPGKQNLPGAEEGDGFFYAKLIKK</sequence>
<dbReference type="EC" id="2.1.1.176" evidence="1"/>
<dbReference type="EMBL" id="CP000038">
    <property type="protein sequence ID" value="AAZ89991.1"/>
    <property type="molecule type" value="Genomic_DNA"/>
</dbReference>
<dbReference type="RefSeq" id="WP_000744782.1">
    <property type="nucleotide sequence ID" value="NC_007384.1"/>
</dbReference>
<dbReference type="SMR" id="Q3YWX1"/>
<dbReference type="KEGG" id="ssn:SSON_3429"/>
<dbReference type="HOGENOM" id="CLU_005316_0_4_6"/>
<dbReference type="Proteomes" id="UP000002529">
    <property type="component" value="Chromosome"/>
</dbReference>
<dbReference type="GO" id="GO:0005829">
    <property type="term" value="C:cytosol"/>
    <property type="evidence" value="ECO:0007669"/>
    <property type="project" value="TreeGrafter"/>
</dbReference>
<dbReference type="GO" id="GO:0003723">
    <property type="term" value="F:RNA binding"/>
    <property type="evidence" value="ECO:0007669"/>
    <property type="project" value="UniProtKB-KW"/>
</dbReference>
<dbReference type="GO" id="GO:0009383">
    <property type="term" value="F:rRNA (cytosine-C5-)-methyltransferase activity"/>
    <property type="evidence" value="ECO:0007669"/>
    <property type="project" value="TreeGrafter"/>
</dbReference>
<dbReference type="GO" id="GO:0006355">
    <property type="term" value="P:regulation of DNA-templated transcription"/>
    <property type="evidence" value="ECO:0007669"/>
    <property type="project" value="InterPro"/>
</dbReference>
<dbReference type="GO" id="GO:0070475">
    <property type="term" value="P:rRNA base methylation"/>
    <property type="evidence" value="ECO:0007669"/>
    <property type="project" value="TreeGrafter"/>
</dbReference>
<dbReference type="CDD" id="cd02440">
    <property type="entry name" value="AdoMet_MTases"/>
    <property type="match status" value="1"/>
</dbReference>
<dbReference type="CDD" id="cd00620">
    <property type="entry name" value="Methyltransferase_Sun"/>
    <property type="match status" value="1"/>
</dbReference>
<dbReference type="FunFam" id="1.10.287.730:FF:000001">
    <property type="entry name" value="Ribosomal RNA small subunit methyltransferase B"/>
    <property type="match status" value="1"/>
</dbReference>
<dbReference type="FunFam" id="1.10.940.10:FF:000002">
    <property type="entry name" value="Ribosomal RNA small subunit methyltransferase B"/>
    <property type="match status" value="1"/>
</dbReference>
<dbReference type="FunFam" id="3.30.70.1170:FF:000002">
    <property type="entry name" value="Ribosomal RNA small subunit methyltransferase B"/>
    <property type="match status" value="1"/>
</dbReference>
<dbReference type="FunFam" id="3.40.50.150:FF:000022">
    <property type="entry name" value="Ribosomal RNA small subunit methyltransferase B"/>
    <property type="match status" value="1"/>
</dbReference>
<dbReference type="Gene3D" id="1.10.287.730">
    <property type="entry name" value="Helix hairpin bin"/>
    <property type="match status" value="1"/>
</dbReference>
<dbReference type="Gene3D" id="1.10.940.10">
    <property type="entry name" value="NusB-like"/>
    <property type="match status" value="1"/>
</dbReference>
<dbReference type="Gene3D" id="3.30.70.1170">
    <property type="entry name" value="Sun protein, domain 3"/>
    <property type="match status" value="1"/>
</dbReference>
<dbReference type="Gene3D" id="3.40.50.150">
    <property type="entry name" value="Vaccinia Virus protein VP39"/>
    <property type="match status" value="1"/>
</dbReference>
<dbReference type="HAMAP" id="MF_01856">
    <property type="entry name" value="16SrRNA_methyltr_B"/>
    <property type="match status" value="1"/>
</dbReference>
<dbReference type="InterPro" id="IPR049560">
    <property type="entry name" value="MeTrfase_RsmB-F_NOP2_cat"/>
</dbReference>
<dbReference type="InterPro" id="IPR001678">
    <property type="entry name" value="MeTrfase_RsmB-F_NOP2_dom"/>
</dbReference>
<dbReference type="InterPro" id="IPR035926">
    <property type="entry name" value="NusB-like_sf"/>
</dbReference>
<dbReference type="InterPro" id="IPR006027">
    <property type="entry name" value="NusB_RsmB_TIM44"/>
</dbReference>
<dbReference type="InterPro" id="IPR023267">
    <property type="entry name" value="RCMT"/>
</dbReference>
<dbReference type="InterPro" id="IPR004573">
    <property type="entry name" value="rRNA_ssu_MeTfrase_B"/>
</dbReference>
<dbReference type="InterPro" id="IPR023541">
    <property type="entry name" value="rRNA_ssu_MeTfrase_B_ent"/>
</dbReference>
<dbReference type="InterPro" id="IPR054728">
    <property type="entry name" value="RsmB-like_ferredoxin"/>
</dbReference>
<dbReference type="InterPro" id="IPR048019">
    <property type="entry name" value="RsmB-like_N"/>
</dbReference>
<dbReference type="InterPro" id="IPR018314">
    <property type="entry name" value="RsmB/NOL1/NOP2-like_CS"/>
</dbReference>
<dbReference type="InterPro" id="IPR029063">
    <property type="entry name" value="SAM-dependent_MTases_sf"/>
</dbReference>
<dbReference type="NCBIfam" id="NF008149">
    <property type="entry name" value="PRK10901.1"/>
    <property type="match status" value="1"/>
</dbReference>
<dbReference type="NCBIfam" id="NF011494">
    <property type="entry name" value="PRK14902.1"/>
    <property type="match status" value="1"/>
</dbReference>
<dbReference type="NCBIfam" id="TIGR00563">
    <property type="entry name" value="rsmB"/>
    <property type="match status" value="1"/>
</dbReference>
<dbReference type="PANTHER" id="PTHR22807:SF61">
    <property type="entry name" value="NOL1_NOP2_SUN FAMILY PROTEIN _ ANTITERMINATION NUSB DOMAIN-CONTAINING PROTEIN"/>
    <property type="match status" value="1"/>
</dbReference>
<dbReference type="PANTHER" id="PTHR22807">
    <property type="entry name" value="NOP2 YEAST -RELATED NOL1/NOP2/FMU SUN DOMAIN-CONTAINING"/>
    <property type="match status" value="1"/>
</dbReference>
<dbReference type="Pfam" id="PF01189">
    <property type="entry name" value="Methyltr_RsmB-F"/>
    <property type="match status" value="1"/>
</dbReference>
<dbReference type="Pfam" id="PF01029">
    <property type="entry name" value="NusB"/>
    <property type="match status" value="1"/>
</dbReference>
<dbReference type="Pfam" id="PF22458">
    <property type="entry name" value="RsmF-B_ferredox"/>
    <property type="match status" value="1"/>
</dbReference>
<dbReference type="PRINTS" id="PR02008">
    <property type="entry name" value="RCMTFAMILY"/>
</dbReference>
<dbReference type="SUPFAM" id="SSF48013">
    <property type="entry name" value="NusB-like"/>
    <property type="match status" value="1"/>
</dbReference>
<dbReference type="SUPFAM" id="SSF53335">
    <property type="entry name" value="S-adenosyl-L-methionine-dependent methyltransferases"/>
    <property type="match status" value="1"/>
</dbReference>
<dbReference type="PROSITE" id="PS01153">
    <property type="entry name" value="NOL1_NOP2_SUN"/>
    <property type="match status" value="1"/>
</dbReference>
<dbReference type="PROSITE" id="PS51686">
    <property type="entry name" value="SAM_MT_RSMB_NOP"/>
    <property type="match status" value="1"/>
</dbReference>
<proteinExistence type="inferred from homology"/>
<gene>
    <name evidence="1" type="primary">rsmB</name>
    <name evidence="1" type="synonym">sun</name>
    <name type="ordered locus">SSON_3429</name>
</gene>
<organism>
    <name type="scientific">Shigella sonnei (strain Ss046)</name>
    <dbReference type="NCBI Taxonomy" id="300269"/>
    <lineage>
        <taxon>Bacteria</taxon>
        <taxon>Pseudomonadati</taxon>
        <taxon>Pseudomonadota</taxon>
        <taxon>Gammaproteobacteria</taxon>
        <taxon>Enterobacterales</taxon>
        <taxon>Enterobacteriaceae</taxon>
        <taxon>Shigella</taxon>
    </lineage>
</organism>
<evidence type="ECO:0000255" key="1">
    <source>
        <dbReference type="HAMAP-Rule" id="MF_01856"/>
    </source>
</evidence>
<feature type="chain" id="PRO_0000366180" description="Ribosomal RNA small subunit methyltransferase B">
    <location>
        <begin position="1"/>
        <end position="429"/>
    </location>
</feature>
<feature type="active site" description="Nucleophile" evidence="1">
    <location>
        <position position="375"/>
    </location>
</feature>
<feature type="binding site" evidence="1">
    <location>
        <begin position="254"/>
        <end position="260"/>
    </location>
    <ligand>
        <name>S-adenosyl-L-methionine</name>
        <dbReference type="ChEBI" id="CHEBI:59789"/>
    </ligand>
</feature>
<feature type="binding site" evidence="1">
    <location>
        <position position="277"/>
    </location>
    <ligand>
        <name>S-adenosyl-L-methionine</name>
        <dbReference type="ChEBI" id="CHEBI:59789"/>
    </ligand>
</feature>
<feature type="binding site" evidence="1">
    <location>
        <position position="303"/>
    </location>
    <ligand>
        <name>S-adenosyl-L-methionine</name>
        <dbReference type="ChEBI" id="CHEBI:59789"/>
    </ligand>
</feature>
<feature type="binding site" evidence="1">
    <location>
        <position position="322"/>
    </location>
    <ligand>
        <name>S-adenosyl-L-methionine</name>
        <dbReference type="ChEBI" id="CHEBI:59789"/>
    </ligand>
</feature>
<reference key="1">
    <citation type="journal article" date="2005" name="Nucleic Acids Res.">
        <title>Genome dynamics and diversity of Shigella species, the etiologic agents of bacillary dysentery.</title>
        <authorList>
            <person name="Yang F."/>
            <person name="Yang J."/>
            <person name="Zhang X."/>
            <person name="Chen L."/>
            <person name="Jiang Y."/>
            <person name="Yan Y."/>
            <person name="Tang X."/>
            <person name="Wang J."/>
            <person name="Xiong Z."/>
            <person name="Dong J."/>
            <person name="Xue Y."/>
            <person name="Zhu Y."/>
            <person name="Xu X."/>
            <person name="Sun L."/>
            <person name="Chen S."/>
            <person name="Nie H."/>
            <person name="Peng J."/>
            <person name="Xu J."/>
            <person name="Wang Y."/>
            <person name="Yuan Z."/>
            <person name="Wen Y."/>
            <person name="Yao Z."/>
            <person name="Shen Y."/>
            <person name="Qiang B."/>
            <person name="Hou Y."/>
            <person name="Yu J."/>
            <person name="Jin Q."/>
        </authorList>
    </citation>
    <scope>NUCLEOTIDE SEQUENCE [LARGE SCALE GENOMIC DNA]</scope>
    <source>
        <strain>Ss046</strain>
    </source>
</reference>
<name>RSMB_SHISS</name>
<keyword id="KW-0963">Cytoplasm</keyword>
<keyword id="KW-0489">Methyltransferase</keyword>
<keyword id="KW-1185">Reference proteome</keyword>
<keyword id="KW-0694">RNA-binding</keyword>
<keyword id="KW-0698">rRNA processing</keyword>
<keyword id="KW-0949">S-adenosyl-L-methionine</keyword>
<keyword id="KW-0808">Transferase</keyword>
<protein>
    <recommendedName>
        <fullName evidence="1">Ribosomal RNA small subunit methyltransferase B</fullName>
        <ecNumber evidence="1">2.1.1.176</ecNumber>
    </recommendedName>
    <alternativeName>
        <fullName evidence="1">16S rRNA m5C967 methyltransferase</fullName>
    </alternativeName>
    <alternativeName>
        <fullName evidence="1">rRNA (cytosine-C(5)-)-methyltransferase RsmB</fullName>
    </alternativeName>
</protein>